<comment type="function">
    <text evidence="1">The phosphoenolpyruvate-dependent sugar phosphotransferase system (sugar PTS), a major carbohydrate active transport system, catalyzes the phosphorylation of incoming sugar substrates concomitantly with their translocation across the cell membrane. The enzyme II complex composed of PtsG and Crr is involved in glucose transport.</text>
</comment>
<comment type="cofactor">
    <cofactor evidence="1">
        <name>Zn(2+)</name>
        <dbReference type="ChEBI" id="CHEBI:29105"/>
    </cofactor>
    <text evidence="1">Binds 1 zinc ion per glycerol kinase EIIA-Glc dimer. The zinc ion is important for dimerization.</text>
</comment>
<comment type="subunit">
    <text evidence="1">Heterodimer with glycerol kinase (glpk).</text>
</comment>
<comment type="subcellular location">
    <subcellularLocation>
        <location evidence="3">Cytoplasm</location>
    </subcellularLocation>
</comment>
<comment type="domain">
    <text evidence="2">The EIIA domain is phosphorylated by phospho-HPr on a histidyl residue. Then, it transfers the phosphoryl group to the EIIB domain.</text>
</comment>
<keyword id="KW-0963">Cytoplasm</keyword>
<keyword id="KW-0418">Kinase</keyword>
<keyword id="KW-0479">Metal-binding</keyword>
<keyword id="KW-0597">Phosphoprotein</keyword>
<keyword id="KW-0598">Phosphotransferase system</keyword>
<keyword id="KW-0762">Sugar transport</keyword>
<keyword id="KW-0808">Transferase</keyword>
<keyword id="KW-0813">Transport</keyword>
<keyword id="KW-0862">Zinc</keyword>
<feature type="chain" id="PRO_0000186547" description="PTS system glucose-specific EIIA component">
    <location>
        <begin position="1"/>
        <end position="166"/>
    </location>
</feature>
<feature type="domain" description="PTS EIIA type-1" evidence="2">
    <location>
        <begin position="34"/>
        <end position="138"/>
    </location>
</feature>
<feature type="active site" description="Tele-phosphohistidine intermediate; for EIIA activity" evidence="1 2">
    <location>
        <position position="86"/>
    </location>
</feature>
<feature type="binding site" evidence="1">
    <location>
        <position position="71"/>
    </location>
    <ligand>
        <name>Zn(2+)</name>
        <dbReference type="ChEBI" id="CHEBI:29105"/>
        <note>ligand shared with glycerol kinase</note>
    </ligand>
</feature>
<feature type="binding site" evidence="1">
    <location>
        <position position="86"/>
    </location>
    <ligand>
        <name>Zn(2+)</name>
        <dbReference type="ChEBI" id="CHEBI:29105"/>
        <note>ligand shared with glycerol kinase</note>
    </ligand>
</feature>
<feature type="site" description="Important for phospho-donor activity" evidence="1">
    <location>
        <position position="71"/>
    </location>
</feature>
<feature type="modified residue" description="Phosphohistidine; by HPr" evidence="1">
    <location>
        <position position="86"/>
    </location>
</feature>
<accession>Q5HFZ9</accession>
<reference key="1">
    <citation type="journal article" date="2005" name="J. Bacteriol.">
        <title>Insights on evolution of virulence and resistance from the complete genome analysis of an early methicillin-resistant Staphylococcus aureus strain and a biofilm-producing methicillin-resistant Staphylococcus epidermidis strain.</title>
        <authorList>
            <person name="Gill S.R."/>
            <person name="Fouts D.E."/>
            <person name="Archer G.L."/>
            <person name="Mongodin E.F."/>
            <person name="DeBoy R.T."/>
            <person name="Ravel J."/>
            <person name="Paulsen I.T."/>
            <person name="Kolonay J.F."/>
            <person name="Brinkac L.M."/>
            <person name="Beanan M.J."/>
            <person name="Dodson R.J."/>
            <person name="Daugherty S.C."/>
            <person name="Madupu R."/>
            <person name="Angiuoli S.V."/>
            <person name="Durkin A.S."/>
            <person name="Haft D.H."/>
            <person name="Vamathevan J.J."/>
            <person name="Khouri H."/>
            <person name="Utterback T.R."/>
            <person name="Lee C."/>
            <person name="Dimitrov G."/>
            <person name="Jiang L."/>
            <person name="Qin H."/>
            <person name="Weidman J."/>
            <person name="Tran K."/>
            <person name="Kang K.H."/>
            <person name="Hance I.R."/>
            <person name="Nelson K.E."/>
            <person name="Fraser C.M."/>
        </authorList>
    </citation>
    <scope>NUCLEOTIDE SEQUENCE [LARGE SCALE GENOMIC DNA]</scope>
    <source>
        <strain>COL</strain>
    </source>
</reference>
<sequence length="166" mass="17961">MFKKLFGKGKEVQKDIAIYAPLTGEFVKIEDIPDPVFAQKMMGEGFGINPTEGEVVSPIAGRVDNVFPTKHAIGLKADNGLELLVHIGLDTVQLDGEGFEVLVSSGDEVNVGDPLVRFNLEYINNNAKSVISPIIITNTDQAASINIYDENAVIKGETKVIDVTMN</sequence>
<proteinExistence type="inferred from homology"/>
<dbReference type="EMBL" id="CP000046">
    <property type="protein sequence ID" value="AAW36660.1"/>
    <property type="molecule type" value="Genomic_DNA"/>
</dbReference>
<dbReference type="RefSeq" id="WP_000473652.1">
    <property type="nucleotide sequence ID" value="NZ_JBGOFO010000003.1"/>
</dbReference>
<dbReference type="SMR" id="Q5HFZ9"/>
<dbReference type="KEGG" id="sac:SACOL1457"/>
<dbReference type="HOGENOM" id="CLU_012312_5_3_9"/>
<dbReference type="Proteomes" id="UP000000530">
    <property type="component" value="Chromosome"/>
</dbReference>
<dbReference type="GO" id="GO:0005737">
    <property type="term" value="C:cytoplasm"/>
    <property type="evidence" value="ECO:0007669"/>
    <property type="project" value="UniProtKB-SubCell"/>
</dbReference>
<dbReference type="GO" id="GO:0016301">
    <property type="term" value="F:kinase activity"/>
    <property type="evidence" value="ECO:0007669"/>
    <property type="project" value="UniProtKB-KW"/>
</dbReference>
<dbReference type="GO" id="GO:0046872">
    <property type="term" value="F:metal ion binding"/>
    <property type="evidence" value="ECO:0007669"/>
    <property type="project" value="UniProtKB-KW"/>
</dbReference>
<dbReference type="GO" id="GO:0009401">
    <property type="term" value="P:phosphoenolpyruvate-dependent sugar phosphotransferase system"/>
    <property type="evidence" value="ECO:0007669"/>
    <property type="project" value="UniProtKB-KW"/>
</dbReference>
<dbReference type="FunFam" id="2.70.70.10:FF:000001">
    <property type="entry name" value="PTS system glucose-specific IIA component"/>
    <property type="match status" value="1"/>
</dbReference>
<dbReference type="Gene3D" id="2.70.70.10">
    <property type="entry name" value="Glucose Permease (Domain IIA)"/>
    <property type="match status" value="1"/>
</dbReference>
<dbReference type="InterPro" id="IPR011055">
    <property type="entry name" value="Dup_hybrid_motif"/>
</dbReference>
<dbReference type="InterPro" id="IPR001127">
    <property type="entry name" value="PTS_EIIA_1_perm"/>
</dbReference>
<dbReference type="InterPro" id="IPR050890">
    <property type="entry name" value="PTS_EIIA_component"/>
</dbReference>
<dbReference type="NCBIfam" id="TIGR00830">
    <property type="entry name" value="PTBA"/>
    <property type="match status" value="1"/>
</dbReference>
<dbReference type="PANTHER" id="PTHR45008">
    <property type="entry name" value="PTS SYSTEM GLUCOSE-SPECIFIC EIIA COMPONENT"/>
    <property type="match status" value="1"/>
</dbReference>
<dbReference type="PANTHER" id="PTHR45008:SF1">
    <property type="entry name" value="PTS SYSTEM GLUCOSE-SPECIFIC EIIA COMPONENT"/>
    <property type="match status" value="1"/>
</dbReference>
<dbReference type="Pfam" id="PF00358">
    <property type="entry name" value="PTS_EIIA_1"/>
    <property type="match status" value="1"/>
</dbReference>
<dbReference type="SUPFAM" id="SSF51261">
    <property type="entry name" value="Duplicated hybrid motif"/>
    <property type="match status" value="1"/>
</dbReference>
<dbReference type="PROSITE" id="PS51093">
    <property type="entry name" value="PTS_EIIA_TYPE_1"/>
    <property type="match status" value="1"/>
</dbReference>
<dbReference type="PROSITE" id="PS00371">
    <property type="entry name" value="PTS_EIIA_TYPE_1_HIS"/>
    <property type="match status" value="1"/>
</dbReference>
<organism>
    <name type="scientific">Staphylococcus aureus (strain COL)</name>
    <dbReference type="NCBI Taxonomy" id="93062"/>
    <lineage>
        <taxon>Bacteria</taxon>
        <taxon>Bacillati</taxon>
        <taxon>Bacillota</taxon>
        <taxon>Bacilli</taxon>
        <taxon>Bacillales</taxon>
        <taxon>Staphylococcaceae</taxon>
        <taxon>Staphylococcus</taxon>
    </lineage>
</organism>
<name>PTGA_STAAC</name>
<protein>
    <recommendedName>
        <fullName evidence="1">PTS system glucose-specific EIIA component</fullName>
    </recommendedName>
    <alternativeName>
        <fullName evidence="1">EIIA-Glc</fullName>
    </alternativeName>
    <alternativeName>
        <fullName evidence="1">EIII-Glc</fullName>
    </alternativeName>
    <alternativeName>
        <fullName evidence="1">Glucose-specific phosphotransferase enzyme IIA component</fullName>
    </alternativeName>
</protein>
<gene>
    <name type="primary">crr</name>
    <name type="ordered locus">SACOL1457</name>
</gene>
<evidence type="ECO:0000250" key="1">
    <source>
        <dbReference type="UniProtKB" id="P69783"/>
    </source>
</evidence>
<evidence type="ECO:0000255" key="2">
    <source>
        <dbReference type="PROSITE-ProRule" id="PRU00416"/>
    </source>
</evidence>
<evidence type="ECO:0000305" key="3"/>